<organism>
    <name type="scientific">Pseudomonas paraeruginosa (strain DSM 24068 / PA7)</name>
    <name type="common">Pseudomonas aeruginosa (strain PA7)</name>
    <dbReference type="NCBI Taxonomy" id="381754"/>
    <lineage>
        <taxon>Bacteria</taxon>
        <taxon>Pseudomonadati</taxon>
        <taxon>Pseudomonadota</taxon>
        <taxon>Gammaproteobacteria</taxon>
        <taxon>Pseudomonadales</taxon>
        <taxon>Pseudomonadaceae</taxon>
        <taxon>Pseudomonas</taxon>
        <taxon>Pseudomonas paraeruginosa</taxon>
    </lineage>
</organism>
<feature type="chain" id="PRO_1000010184" description="Ribosomal RNA small subunit methyltransferase G">
    <location>
        <begin position="1"/>
        <end position="214"/>
    </location>
</feature>
<feature type="binding site" evidence="1">
    <location>
        <position position="81"/>
    </location>
    <ligand>
        <name>S-adenosyl-L-methionine</name>
        <dbReference type="ChEBI" id="CHEBI:59789"/>
    </ligand>
</feature>
<feature type="binding site" evidence="1">
    <location>
        <position position="86"/>
    </location>
    <ligand>
        <name>S-adenosyl-L-methionine</name>
        <dbReference type="ChEBI" id="CHEBI:59789"/>
    </ligand>
</feature>
<feature type="binding site" evidence="1">
    <location>
        <begin position="132"/>
        <end position="133"/>
    </location>
    <ligand>
        <name>S-adenosyl-L-methionine</name>
        <dbReference type="ChEBI" id="CHEBI:59789"/>
    </ligand>
</feature>
<feature type="binding site" evidence="1">
    <location>
        <position position="147"/>
    </location>
    <ligand>
        <name>S-adenosyl-L-methionine</name>
        <dbReference type="ChEBI" id="CHEBI:59789"/>
    </ligand>
</feature>
<proteinExistence type="inferred from homology"/>
<sequence length="214" mass="23746">MSAVTRHHADELARGADELGVALDAEKKHQLLAYLALLIKWNKAYNLTAVRDPDEMVSRHLLDSLSIVPHAEAGDNWLDVGSGGGMPGVPLAILFPERRLTLLDSNGKKTRFLTQVKLELKLANLDVVHSRVEAFRPESPFDGIVSRAFSSLEDFANWTRHLGGQETRWLAMKGVHPNEELAALPEDFRVEAEHALAVPGCQGQRHLLILRRTA</sequence>
<reference key="1">
    <citation type="submission" date="2007-06" db="EMBL/GenBank/DDBJ databases">
        <authorList>
            <person name="Dodson R.J."/>
            <person name="Harkins D."/>
            <person name="Paulsen I.T."/>
        </authorList>
    </citation>
    <scope>NUCLEOTIDE SEQUENCE [LARGE SCALE GENOMIC DNA]</scope>
    <source>
        <strain>DSM 24068 / PA7</strain>
    </source>
</reference>
<comment type="function">
    <text evidence="1">Specifically methylates the N7 position of guanine in position 527 of 16S rRNA.</text>
</comment>
<comment type="catalytic activity">
    <reaction evidence="1">
        <text>guanosine(527) in 16S rRNA + S-adenosyl-L-methionine = N(7)-methylguanosine(527) in 16S rRNA + S-adenosyl-L-homocysteine</text>
        <dbReference type="Rhea" id="RHEA:42732"/>
        <dbReference type="Rhea" id="RHEA-COMP:10209"/>
        <dbReference type="Rhea" id="RHEA-COMP:10210"/>
        <dbReference type="ChEBI" id="CHEBI:57856"/>
        <dbReference type="ChEBI" id="CHEBI:59789"/>
        <dbReference type="ChEBI" id="CHEBI:74269"/>
        <dbReference type="ChEBI" id="CHEBI:74480"/>
        <dbReference type="EC" id="2.1.1.170"/>
    </reaction>
</comment>
<comment type="subcellular location">
    <subcellularLocation>
        <location evidence="1">Cytoplasm</location>
    </subcellularLocation>
</comment>
<comment type="similarity">
    <text evidence="1">Belongs to the methyltransferase superfamily. RNA methyltransferase RsmG family.</text>
</comment>
<name>RSMG_PSEP7</name>
<dbReference type="EC" id="2.1.1.170" evidence="1"/>
<dbReference type="EMBL" id="CP000744">
    <property type="protein sequence ID" value="ABR83413.1"/>
    <property type="molecule type" value="Genomic_DNA"/>
</dbReference>
<dbReference type="RefSeq" id="WP_012078100.1">
    <property type="nucleotide sequence ID" value="NC_009656.1"/>
</dbReference>
<dbReference type="SMR" id="A6VF42"/>
<dbReference type="KEGG" id="pap:PSPA7_6366"/>
<dbReference type="HOGENOM" id="CLU_065341_2_0_6"/>
<dbReference type="Proteomes" id="UP000001582">
    <property type="component" value="Chromosome"/>
</dbReference>
<dbReference type="GO" id="GO:0005829">
    <property type="term" value="C:cytosol"/>
    <property type="evidence" value="ECO:0007669"/>
    <property type="project" value="TreeGrafter"/>
</dbReference>
<dbReference type="GO" id="GO:0070043">
    <property type="term" value="F:rRNA (guanine-N7-)-methyltransferase activity"/>
    <property type="evidence" value="ECO:0007669"/>
    <property type="project" value="UniProtKB-UniRule"/>
</dbReference>
<dbReference type="FunFam" id="3.40.50.150:FF:000032">
    <property type="entry name" value="Ribosomal RNA small subunit methyltransferase G"/>
    <property type="match status" value="1"/>
</dbReference>
<dbReference type="Gene3D" id="3.40.50.150">
    <property type="entry name" value="Vaccinia Virus protein VP39"/>
    <property type="match status" value="1"/>
</dbReference>
<dbReference type="HAMAP" id="MF_00074">
    <property type="entry name" value="16SrRNA_methyltr_G"/>
    <property type="match status" value="1"/>
</dbReference>
<dbReference type="InterPro" id="IPR003682">
    <property type="entry name" value="rRNA_ssu_MeTfrase_G"/>
</dbReference>
<dbReference type="InterPro" id="IPR029063">
    <property type="entry name" value="SAM-dependent_MTases_sf"/>
</dbReference>
<dbReference type="NCBIfam" id="TIGR00138">
    <property type="entry name" value="rsmG_gidB"/>
    <property type="match status" value="1"/>
</dbReference>
<dbReference type="PANTHER" id="PTHR31760">
    <property type="entry name" value="S-ADENOSYL-L-METHIONINE-DEPENDENT METHYLTRANSFERASES SUPERFAMILY PROTEIN"/>
    <property type="match status" value="1"/>
</dbReference>
<dbReference type="PANTHER" id="PTHR31760:SF0">
    <property type="entry name" value="S-ADENOSYL-L-METHIONINE-DEPENDENT METHYLTRANSFERASES SUPERFAMILY PROTEIN"/>
    <property type="match status" value="1"/>
</dbReference>
<dbReference type="Pfam" id="PF02527">
    <property type="entry name" value="GidB"/>
    <property type="match status" value="1"/>
</dbReference>
<dbReference type="PIRSF" id="PIRSF003078">
    <property type="entry name" value="GidB"/>
    <property type="match status" value="1"/>
</dbReference>
<dbReference type="SUPFAM" id="SSF53335">
    <property type="entry name" value="S-adenosyl-L-methionine-dependent methyltransferases"/>
    <property type="match status" value="1"/>
</dbReference>
<evidence type="ECO:0000255" key="1">
    <source>
        <dbReference type="HAMAP-Rule" id="MF_00074"/>
    </source>
</evidence>
<protein>
    <recommendedName>
        <fullName evidence="1">Ribosomal RNA small subunit methyltransferase G</fullName>
        <ecNumber evidence="1">2.1.1.170</ecNumber>
    </recommendedName>
    <alternativeName>
        <fullName evidence="1">16S rRNA 7-methylguanosine methyltransferase</fullName>
        <shortName evidence="1">16S rRNA m7G methyltransferase</shortName>
    </alternativeName>
</protein>
<accession>A6VF42</accession>
<gene>
    <name evidence="1" type="primary">rsmG</name>
    <name type="ordered locus">PSPA7_6366</name>
</gene>
<keyword id="KW-0963">Cytoplasm</keyword>
<keyword id="KW-0489">Methyltransferase</keyword>
<keyword id="KW-0698">rRNA processing</keyword>
<keyword id="KW-0949">S-adenosyl-L-methionine</keyword>
<keyword id="KW-0808">Transferase</keyword>